<reference key="1">
    <citation type="journal article" date="2006" name="Genome Biol.">
        <title>Genomic analysis reveals that Pseudomonas aeruginosa virulence is combinatorial.</title>
        <authorList>
            <person name="Lee D.G."/>
            <person name="Urbach J.M."/>
            <person name="Wu G."/>
            <person name="Liberati N.T."/>
            <person name="Feinbaum R.L."/>
            <person name="Miyata S."/>
            <person name="Diggins L.T."/>
            <person name="He J."/>
            <person name="Saucier M."/>
            <person name="Deziel E."/>
            <person name="Friedman L."/>
            <person name="Li L."/>
            <person name="Grills G."/>
            <person name="Montgomery K."/>
            <person name="Kucherlapati R."/>
            <person name="Rahme L.G."/>
            <person name="Ausubel F.M."/>
        </authorList>
    </citation>
    <scope>NUCLEOTIDE SEQUENCE [LARGE SCALE GENOMIC DNA]</scope>
    <source>
        <strain>UCBPP-PA14</strain>
    </source>
</reference>
<gene>
    <name evidence="1" type="primary">ispE</name>
    <name type="ordered locus">PA14_61750</name>
</gene>
<evidence type="ECO:0000255" key="1">
    <source>
        <dbReference type="HAMAP-Rule" id="MF_00061"/>
    </source>
</evidence>
<protein>
    <recommendedName>
        <fullName evidence="1">4-diphosphocytidyl-2-C-methyl-D-erythritol kinase</fullName>
        <shortName evidence="1">CMK</shortName>
        <ecNumber evidence="1">2.7.1.148</ecNumber>
    </recommendedName>
    <alternativeName>
        <fullName evidence="1">4-(cytidine-5'-diphospho)-2-C-methyl-D-erythritol kinase</fullName>
    </alternativeName>
</protein>
<name>ISPE_PSEAB</name>
<comment type="function">
    <text evidence="1">Catalyzes the phosphorylation of the position 2 hydroxy group of 4-diphosphocytidyl-2C-methyl-D-erythritol.</text>
</comment>
<comment type="catalytic activity">
    <reaction evidence="1">
        <text>4-CDP-2-C-methyl-D-erythritol + ATP = 4-CDP-2-C-methyl-D-erythritol 2-phosphate + ADP + H(+)</text>
        <dbReference type="Rhea" id="RHEA:18437"/>
        <dbReference type="ChEBI" id="CHEBI:15378"/>
        <dbReference type="ChEBI" id="CHEBI:30616"/>
        <dbReference type="ChEBI" id="CHEBI:57823"/>
        <dbReference type="ChEBI" id="CHEBI:57919"/>
        <dbReference type="ChEBI" id="CHEBI:456216"/>
        <dbReference type="EC" id="2.7.1.148"/>
    </reaction>
</comment>
<comment type="pathway">
    <text evidence="1">Isoprenoid biosynthesis; isopentenyl diphosphate biosynthesis via DXP pathway; isopentenyl diphosphate from 1-deoxy-D-xylulose 5-phosphate: step 3/6.</text>
</comment>
<comment type="similarity">
    <text evidence="1">Belongs to the GHMP kinase family. IspE subfamily.</text>
</comment>
<proteinExistence type="inferred from homology"/>
<organism>
    <name type="scientific">Pseudomonas aeruginosa (strain UCBPP-PA14)</name>
    <dbReference type="NCBI Taxonomy" id="208963"/>
    <lineage>
        <taxon>Bacteria</taxon>
        <taxon>Pseudomonadati</taxon>
        <taxon>Pseudomonadota</taxon>
        <taxon>Gammaproteobacteria</taxon>
        <taxon>Pseudomonadales</taxon>
        <taxon>Pseudomonadaceae</taxon>
        <taxon>Pseudomonas</taxon>
    </lineage>
</organism>
<dbReference type="EC" id="2.7.1.148" evidence="1"/>
<dbReference type="EMBL" id="CP000438">
    <property type="protein sequence ID" value="ABJ14050.1"/>
    <property type="molecule type" value="Genomic_DNA"/>
</dbReference>
<dbReference type="RefSeq" id="WP_003095007.1">
    <property type="nucleotide sequence ID" value="NZ_CP034244.1"/>
</dbReference>
<dbReference type="SMR" id="Q02G05"/>
<dbReference type="KEGG" id="pau:PA14_61750"/>
<dbReference type="PseudoCAP" id="PA14_61750"/>
<dbReference type="HOGENOM" id="CLU_053057_3_0_6"/>
<dbReference type="BioCyc" id="PAER208963:G1G74-5220-MONOMER"/>
<dbReference type="UniPathway" id="UPA00056">
    <property type="reaction ID" value="UER00094"/>
</dbReference>
<dbReference type="Proteomes" id="UP000000653">
    <property type="component" value="Chromosome"/>
</dbReference>
<dbReference type="GO" id="GO:0050515">
    <property type="term" value="F:4-(cytidine 5'-diphospho)-2-C-methyl-D-erythritol kinase activity"/>
    <property type="evidence" value="ECO:0007669"/>
    <property type="project" value="UniProtKB-UniRule"/>
</dbReference>
<dbReference type="GO" id="GO:0005524">
    <property type="term" value="F:ATP binding"/>
    <property type="evidence" value="ECO:0007669"/>
    <property type="project" value="UniProtKB-UniRule"/>
</dbReference>
<dbReference type="GO" id="GO:0019288">
    <property type="term" value="P:isopentenyl diphosphate biosynthetic process, methylerythritol 4-phosphate pathway"/>
    <property type="evidence" value="ECO:0007669"/>
    <property type="project" value="UniProtKB-UniRule"/>
</dbReference>
<dbReference type="GO" id="GO:0016114">
    <property type="term" value="P:terpenoid biosynthetic process"/>
    <property type="evidence" value="ECO:0007669"/>
    <property type="project" value="InterPro"/>
</dbReference>
<dbReference type="FunFam" id="3.30.230.10:FF:000022">
    <property type="entry name" value="4-diphosphocytidyl-2-C-methyl-D-erythritol kinase"/>
    <property type="match status" value="1"/>
</dbReference>
<dbReference type="Gene3D" id="3.30.230.10">
    <property type="match status" value="1"/>
</dbReference>
<dbReference type="Gene3D" id="3.30.70.890">
    <property type="entry name" value="GHMP kinase, C-terminal domain"/>
    <property type="match status" value="1"/>
</dbReference>
<dbReference type="HAMAP" id="MF_00061">
    <property type="entry name" value="IspE"/>
    <property type="match status" value="1"/>
</dbReference>
<dbReference type="InterPro" id="IPR013750">
    <property type="entry name" value="GHMP_kinase_C_dom"/>
</dbReference>
<dbReference type="InterPro" id="IPR036554">
    <property type="entry name" value="GHMP_kinase_C_sf"/>
</dbReference>
<dbReference type="InterPro" id="IPR006204">
    <property type="entry name" value="GHMP_kinase_N_dom"/>
</dbReference>
<dbReference type="InterPro" id="IPR004424">
    <property type="entry name" value="IspE"/>
</dbReference>
<dbReference type="InterPro" id="IPR020568">
    <property type="entry name" value="Ribosomal_Su5_D2-typ_SF"/>
</dbReference>
<dbReference type="InterPro" id="IPR014721">
    <property type="entry name" value="Ribsml_uS5_D2-typ_fold_subgr"/>
</dbReference>
<dbReference type="NCBIfam" id="TIGR00154">
    <property type="entry name" value="ispE"/>
    <property type="match status" value="1"/>
</dbReference>
<dbReference type="PANTHER" id="PTHR43527">
    <property type="entry name" value="4-DIPHOSPHOCYTIDYL-2-C-METHYL-D-ERYTHRITOL KINASE, CHLOROPLASTIC"/>
    <property type="match status" value="1"/>
</dbReference>
<dbReference type="PANTHER" id="PTHR43527:SF2">
    <property type="entry name" value="4-DIPHOSPHOCYTIDYL-2-C-METHYL-D-ERYTHRITOL KINASE, CHLOROPLASTIC"/>
    <property type="match status" value="1"/>
</dbReference>
<dbReference type="Pfam" id="PF08544">
    <property type="entry name" value="GHMP_kinases_C"/>
    <property type="match status" value="1"/>
</dbReference>
<dbReference type="Pfam" id="PF00288">
    <property type="entry name" value="GHMP_kinases_N"/>
    <property type="match status" value="1"/>
</dbReference>
<dbReference type="PIRSF" id="PIRSF010376">
    <property type="entry name" value="IspE"/>
    <property type="match status" value="1"/>
</dbReference>
<dbReference type="SUPFAM" id="SSF55060">
    <property type="entry name" value="GHMP Kinase, C-terminal domain"/>
    <property type="match status" value="1"/>
</dbReference>
<dbReference type="SUPFAM" id="SSF54211">
    <property type="entry name" value="Ribosomal protein S5 domain 2-like"/>
    <property type="match status" value="1"/>
</dbReference>
<accession>Q02G05</accession>
<keyword id="KW-0067">ATP-binding</keyword>
<keyword id="KW-0414">Isoprene biosynthesis</keyword>
<keyword id="KW-0418">Kinase</keyword>
<keyword id="KW-0547">Nucleotide-binding</keyword>
<keyword id="KW-0808">Transferase</keyword>
<feature type="chain" id="PRO_1000007875" description="4-diphosphocytidyl-2-C-methyl-D-erythritol kinase">
    <location>
        <begin position="1"/>
        <end position="282"/>
    </location>
</feature>
<feature type="active site" evidence="1">
    <location>
        <position position="12"/>
    </location>
</feature>
<feature type="active site" evidence="1">
    <location>
        <position position="137"/>
    </location>
</feature>
<feature type="binding site" evidence="1">
    <location>
        <begin position="95"/>
        <end position="105"/>
    </location>
    <ligand>
        <name>ATP</name>
        <dbReference type="ChEBI" id="CHEBI:30616"/>
    </ligand>
</feature>
<sequence length="282" mass="30875">MSVRLSLPAPAKLNLFLHILGRRDDGYHELQTLFQFLDHGDELHFEARQDGQVRLHTEIAGVPHDSNLIVRAARGLQEASGSLQGVDIWLDKRLPMGGGIGGGSSDAATTLLALNHLWQLGWDEDRIAALGLRLGADVPVFTRGRAAFAEGVGEKLTPVDIPELWYLVLVPQVLVSTAEIFSDPLLTRDSPAIKVRTVLEGDSRNDCQPVVERRYPEVRNALILLNKFVSARLTGTGGCVFGSFPNKAEADKVSALLPDHLQRFVAKGSNVSMLHRKLETLV</sequence>